<organism>
    <name type="scientific">Aquarana catesbeiana</name>
    <name type="common">American bullfrog</name>
    <name type="synonym">Rana catesbeiana</name>
    <dbReference type="NCBI Taxonomy" id="8400"/>
    <lineage>
        <taxon>Eukaryota</taxon>
        <taxon>Metazoa</taxon>
        <taxon>Chordata</taxon>
        <taxon>Craniata</taxon>
        <taxon>Vertebrata</taxon>
        <taxon>Euteleostomi</taxon>
        <taxon>Amphibia</taxon>
        <taxon>Batrachia</taxon>
        <taxon>Anura</taxon>
        <taxon>Neobatrachia</taxon>
        <taxon>Ranoidea</taxon>
        <taxon>Ranidae</taxon>
        <taxon>Aquarana</taxon>
    </lineage>
</organism>
<dbReference type="GO" id="GO:0005576">
    <property type="term" value="C:extracellular region"/>
    <property type="evidence" value="ECO:0007669"/>
    <property type="project" value="UniProtKB-SubCell"/>
</dbReference>
<dbReference type="GO" id="GO:0042742">
    <property type="term" value="P:defense response to bacterium"/>
    <property type="evidence" value="ECO:0007669"/>
    <property type="project" value="UniProtKB-KW"/>
</dbReference>
<sequence length="14" mass="1625">FLFPLITSFLSKVL</sequence>
<proteinExistence type="evidence at protein level"/>
<evidence type="ECO:0000269" key="1">
    <source>
    </source>
</evidence>
<evidence type="ECO:0000303" key="2">
    <source>
    </source>
</evidence>
<evidence type="ECO:0000305" key="3"/>
<evidence type="ECO:0000305" key="4">
    <source>
    </source>
</evidence>
<protein>
    <recommendedName>
        <fullName evidence="2">Ranatuerin-9</fullName>
    </recommendedName>
    <alternativeName>
        <fullName evidence="3">Temporin</fullName>
    </alternativeName>
</protein>
<comment type="function">
    <text evidence="1">Antibacterial activity against Gram-positive bacterium S.aureus (MIC=130 uM). Shows no detectable hemolytic activity towards human erythrocytes.</text>
</comment>
<comment type="subcellular location">
    <subcellularLocation>
        <location evidence="1">Secreted</location>
    </subcellularLocation>
</comment>
<comment type="tissue specificity">
    <text evidence="4">Expressed by the skin glands.</text>
</comment>
<comment type="similarity">
    <text evidence="3">Belongs to the frog skin active peptide (FSAP) family. Temporin subfamily.</text>
</comment>
<reference key="1">
    <citation type="journal article" date="1998" name="Biochem. Biophys. Res. Commun.">
        <title>Ranatuerins: antimicrobial peptides isolated from the skin of the American bullfrog, Rana catesbeiana.</title>
        <authorList>
            <person name="Goraya J."/>
            <person name="Knoop F.C."/>
            <person name="Conlon J.M."/>
        </authorList>
    </citation>
    <scope>PROTEIN SEQUENCE</scope>
    <scope>FUNCTION</scope>
    <scope>SUBCELLULAR LOCATION</scope>
    <source>
        <tissue>Skin secretion</tissue>
    </source>
</reference>
<accession>P82824</accession>
<feature type="peptide" id="PRO_0000043566" description="Ranatuerin-9" evidence="1">
    <location>
        <begin position="1"/>
        <end position="14"/>
    </location>
</feature>
<name>TP9_AQUCT</name>
<keyword id="KW-0878">Amphibian defense peptide</keyword>
<keyword id="KW-0044">Antibiotic</keyword>
<keyword id="KW-0929">Antimicrobial</keyword>
<keyword id="KW-0903">Direct protein sequencing</keyword>
<keyword id="KW-0964">Secreted</keyword>